<accession>C6D9B8</accession>
<keyword id="KW-0010">Activator</keyword>
<keyword id="KW-1005">Bacterial flagellum biogenesis</keyword>
<keyword id="KW-0963">Cytoplasm</keyword>
<keyword id="KW-1015">Disulfide bond</keyword>
<keyword id="KW-0238">DNA-binding</keyword>
<keyword id="KW-0804">Transcription</keyword>
<keyword id="KW-0805">Transcription regulation</keyword>
<feature type="chain" id="PRO_1000212728" description="Flagellar transcriptional regulator FlhD">
    <location>
        <begin position="1"/>
        <end position="116"/>
    </location>
</feature>
<feature type="disulfide bond" description="Interchain" evidence="1">
    <location>
        <position position="65"/>
    </location>
</feature>
<evidence type="ECO:0000255" key="1">
    <source>
        <dbReference type="HAMAP-Rule" id="MF_00725"/>
    </source>
</evidence>
<sequence length="116" mass="13359">MGTSELLKHIYDINLSYLLLAQRLINDEKASAMFRLGINDEMADTLMQLTLPQMVKLAETNQLICHFRFNDHNTIKVLTQESRVDDLQQIHTGILLSSHLLQQLTSKEENLPKKRA</sequence>
<comment type="function">
    <text evidence="1">Functions in complex with FlhC as a master transcriptional regulator that regulates transcription of several flagellar and non-flagellar operons by binding to their promoter region. Activates expression of class 2 flagellar genes, including fliA, which is a flagellum-specific sigma factor that turns on the class 3 genes. Also regulates genes whose products function in a variety of physiological pathways.</text>
</comment>
<comment type="subunit">
    <text evidence="1">Homodimer; disulfide-linked. Forms a heterohexamer composed of two FlhC and four FlhD subunits. Each FlhC binds a FlhD dimer, forming a heterotrimer, and a hexamer assembles by dimerization of two heterotrimers.</text>
</comment>
<comment type="subcellular location">
    <subcellularLocation>
        <location evidence="1">Cytoplasm</location>
    </subcellularLocation>
</comment>
<comment type="domain">
    <text evidence="1">The C-terminal region contains a putative helix-turn-helix (HTH) motif, suggesting that this region may bind DNA.</text>
</comment>
<comment type="similarity">
    <text evidence="1">Belongs to the FlhD family.</text>
</comment>
<protein>
    <recommendedName>
        <fullName evidence="1">Flagellar transcriptional regulator FlhD</fullName>
    </recommendedName>
</protein>
<reference key="1">
    <citation type="submission" date="2009-07" db="EMBL/GenBank/DDBJ databases">
        <title>Complete sequence of Pectobacterium carotovorum subsp. carotovorum PC1.</title>
        <authorList>
            <consortium name="US DOE Joint Genome Institute"/>
            <person name="Lucas S."/>
            <person name="Copeland A."/>
            <person name="Lapidus A."/>
            <person name="Glavina del Rio T."/>
            <person name="Tice H."/>
            <person name="Bruce D."/>
            <person name="Goodwin L."/>
            <person name="Pitluck S."/>
            <person name="Munk A.C."/>
            <person name="Brettin T."/>
            <person name="Detter J.C."/>
            <person name="Han C."/>
            <person name="Tapia R."/>
            <person name="Larimer F."/>
            <person name="Land M."/>
            <person name="Hauser L."/>
            <person name="Kyrpides N."/>
            <person name="Mikhailova N."/>
            <person name="Balakrishnan V."/>
            <person name="Glasner J."/>
            <person name="Perna N.T."/>
        </authorList>
    </citation>
    <scope>NUCLEOTIDE SEQUENCE [LARGE SCALE GENOMIC DNA]</scope>
    <source>
        <strain>PC1</strain>
    </source>
</reference>
<dbReference type="EMBL" id="CP001657">
    <property type="protein sequence ID" value="ACT13645.1"/>
    <property type="molecule type" value="Genomic_DNA"/>
</dbReference>
<dbReference type="RefSeq" id="WP_015840816.1">
    <property type="nucleotide sequence ID" value="NC_012917.1"/>
</dbReference>
<dbReference type="SMR" id="C6D9B8"/>
<dbReference type="STRING" id="561230.PC1_2615"/>
<dbReference type="GeneID" id="67794611"/>
<dbReference type="KEGG" id="pct:PC1_2615"/>
<dbReference type="eggNOG" id="ENOG5031P80">
    <property type="taxonomic scope" value="Bacteria"/>
</dbReference>
<dbReference type="HOGENOM" id="CLU_144160_0_0_6"/>
<dbReference type="OrthoDB" id="5298036at2"/>
<dbReference type="Proteomes" id="UP000002736">
    <property type="component" value="Chromosome"/>
</dbReference>
<dbReference type="GO" id="GO:0005737">
    <property type="term" value="C:cytoplasm"/>
    <property type="evidence" value="ECO:0007669"/>
    <property type="project" value="UniProtKB-SubCell"/>
</dbReference>
<dbReference type="GO" id="GO:0003677">
    <property type="term" value="F:DNA binding"/>
    <property type="evidence" value="ECO:0007669"/>
    <property type="project" value="UniProtKB-UniRule"/>
</dbReference>
<dbReference type="GO" id="GO:0044780">
    <property type="term" value="P:bacterial-type flagellum assembly"/>
    <property type="evidence" value="ECO:0007669"/>
    <property type="project" value="InterPro"/>
</dbReference>
<dbReference type="GO" id="GO:0045893">
    <property type="term" value="P:positive regulation of DNA-templated transcription"/>
    <property type="evidence" value="ECO:0007669"/>
    <property type="project" value="InterPro"/>
</dbReference>
<dbReference type="GO" id="GO:1902208">
    <property type="term" value="P:regulation of bacterial-type flagellum assembly"/>
    <property type="evidence" value="ECO:0007669"/>
    <property type="project" value="UniProtKB-UniRule"/>
</dbReference>
<dbReference type="Gene3D" id="1.10.4000.10">
    <property type="entry name" value="Flagellar transcriptional activator FlhD"/>
    <property type="match status" value="1"/>
</dbReference>
<dbReference type="HAMAP" id="MF_00725">
    <property type="entry name" value="FlhD"/>
    <property type="match status" value="1"/>
</dbReference>
<dbReference type="InterPro" id="IPR023559">
    <property type="entry name" value="Flagellar_FlhD"/>
</dbReference>
<dbReference type="InterPro" id="IPR036194">
    <property type="entry name" value="FlhD_sf"/>
</dbReference>
<dbReference type="NCBIfam" id="NF002783">
    <property type="entry name" value="PRK02909.1-1"/>
    <property type="match status" value="1"/>
</dbReference>
<dbReference type="Pfam" id="PF05247">
    <property type="entry name" value="FlhD"/>
    <property type="match status" value="1"/>
</dbReference>
<dbReference type="SUPFAM" id="SSF63592">
    <property type="entry name" value="Flagellar transcriptional activator FlhD"/>
    <property type="match status" value="1"/>
</dbReference>
<gene>
    <name evidence="1" type="primary">flhD</name>
    <name type="ordered locus">PC1_2615</name>
</gene>
<name>FLHD_PECCP</name>
<organism>
    <name type="scientific">Pectobacterium carotovorum subsp. carotovorum (strain PC1)</name>
    <dbReference type="NCBI Taxonomy" id="561230"/>
    <lineage>
        <taxon>Bacteria</taxon>
        <taxon>Pseudomonadati</taxon>
        <taxon>Pseudomonadota</taxon>
        <taxon>Gammaproteobacteria</taxon>
        <taxon>Enterobacterales</taxon>
        <taxon>Pectobacteriaceae</taxon>
        <taxon>Pectobacterium</taxon>
    </lineage>
</organism>
<proteinExistence type="inferred from homology"/>